<accession>A0QJ14</accession>
<evidence type="ECO:0000255" key="1">
    <source>
        <dbReference type="HAMAP-Rule" id="MF_00183"/>
    </source>
</evidence>
<feature type="chain" id="PRO_1000020277" description="1-deoxy-D-xylulose 5-phosphate reductoisomerase">
    <location>
        <begin position="1"/>
        <end position="407"/>
    </location>
</feature>
<feature type="binding site" evidence="1">
    <location>
        <position position="22"/>
    </location>
    <ligand>
        <name>NADPH</name>
        <dbReference type="ChEBI" id="CHEBI:57783"/>
    </ligand>
</feature>
<feature type="binding site" evidence="1">
    <location>
        <position position="23"/>
    </location>
    <ligand>
        <name>NADPH</name>
        <dbReference type="ChEBI" id="CHEBI:57783"/>
    </ligand>
</feature>
<feature type="binding site" evidence="1">
    <location>
        <position position="24"/>
    </location>
    <ligand>
        <name>NADPH</name>
        <dbReference type="ChEBI" id="CHEBI:57783"/>
    </ligand>
</feature>
<feature type="binding site" evidence="1">
    <location>
        <position position="25"/>
    </location>
    <ligand>
        <name>NADPH</name>
        <dbReference type="ChEBI" id="CHEBI:57783"/>
    </ligand>
</feature>
<feature type="binding site" evidence="1">
    <location>
        <position position="48"/>
    </location>
    <ligand>
        <name>NADPH</name>
        <dbReference type="ChEBI" id="CHEBI:57783"/>
    </ligand>
</feature>
<feature type="binding site" evidence="1">
    <location>
        <position position="51"/>
    </location>
    <ligand>
        <name>NADPH</name>
        <dbReference type="ChEBI" id="CHEBI:57783"/>
    </ligand>
</feature>
<feature type="binding site" evidence="1">
    <location>
        <position position="128"/>
    </location>
    <ligand>
        <name>NADPH</name>
        <dbReference type="ChEBI" id="CHEBI:57783"/>
    </ligand>
</feature>
<feature type="binding site" evidence="1">
    <location>
        <position position="129"/>
    </location>
    <ligand>
        <name>1-deoxy-D-xylulose 5-phosphate</name>
        <dbReference type="ChEBI" id="CHEBI:57792"/>
    </ligand>
</feature>
<feature type="binding site" evidence="1">
    <location>
        <position position="130"/>
    </location>
    <ligand>
        <name>NADPH</name>
        <dbReference type="ChEBI" id="CHEBI:57783"/>
    </ligand>
</feature>
<feature type="binding site" evidence="1">
    <location>
        <position position="152"/>
    </location>
    <ligand>
        <name>Mn(2+)</name>
        <dbReference type="ChEBI" id="CHEBI:29035"/>
    </ligand>
</feature>
<feature type="binding site" evidence="1">
    <location>
        <position position="153"/>
    </location>
    <ligand>
        <name>1-deoxy-D-xylulose 5-phosphate</name>
        <dbReference type="ChEBI" id="CHEBI:57792"/>
    </ligand>
</feature>
<feature type="binding site" evidence="1">
    <location>
        <position position="154"/>
    </location>
    <ligand>
        <name>1-deoxy-D-xylulose 5-phosphate</name>
        <dbReference type="ChEBI" id="CHEBI:57792"/>
    </ligand>
</feature>
<feature type="binding site" evidence="1">
    <location>
        <position position="154"/>
    </location>
    <ligand>
        <name>Mn(2+)</name>
        <dbReference type="ChEBI" id="CHEBI:29035"/>
    </ligand>
</feature>
<feature type="binding site" evidence="1">
    <location>
        <position position="178"/>
    </location>
    <ligand>
        <name>1-deoxy-D-xylulose 5-phosphate</name>
        <dbReference type="ChEBI" id="CHEBI:57792"/>
    </ligand>
</feature>
<feature type="binding site" evidence="1">
    <location>
        <position position="201"/>
    </location>
    <ligand>
        <name>1-deoxy-D-xylulose 5-phosphate</name>
        <dbReference type="ChEBI" id="CHEBI:57792"/>
    </ligand>
</feature>
<feature type="binding site" evidence="1">
    <location>
        <position position="207"/>
    </location>
    <ligand>
        <name>NADPH</name>
        <dbReference type="ChEBI" id="CHEBI:57783"/>
    </ligand>
</feature>
<feature type="binding site" evidence="1">
    <location>
        <position position="214"/>
    </location>
    <ligand>
        <name>1-deoxy-D-xylulose 5-phosphate</name>
        <dbReference type="ChEBI" id="CHEBI:57792"/>
    </ligand>
</feature>
<feature type="binding site" evidence="1">
    <location>
        <position position="219"/>
    </location>
    <ligand>
        <name>1-deoxy-D-xylulose 5-phosphate</name>
        <dbReference type="ChEBI" id="CHEBI:57792"/>
    </ligand>
</feature>
<feature type="binding site" evidence="1">
    <location>
        <position position="220"/>
    </location>
    <ligand>
        <name>1-deoxy-D-xylulose 5-phosphate</name>
        <dbReference type="ChEBI" id="CHEBI:57792"/>
    </ligand>
</feature>
<feature type="binding site" evidence="1">
    <location>
        <position position="223"/>
    </location>
    <ligand>
        <name>1-deoxy-D-xylulose 5-phosphate</name>
        <dbReference type="ChEBI" id="CHEBI:57792"/>
    </ligand>
</feature>
<feature type="binding site" evidence="1">
    <location>
        <position position="223"/>
    </location>
    <ligand>
        <name>Mn(2+)</name>
        <dbReference type="ChEBI" id="CHEBI:29035"/>
    </ligand>
</feature>
<dbReference type="EC" id="1.1.1.267" evidence="1"/>
<dbReference type="EMBL" id="CP000479">
    <property type="protein sequence ID" value="ABK68340.1"/>
    <property type="molecule type" value="Genomic_DNA"/>
</dbReference>
<dbReference type="SMR" id="A0QJ14"/>
<dbReference type="KEGG" id="mav:MAV_3727"/>
<dbReference type="HOGENOM" id="CLU_035714_4_0_11"/>
<dbReference type="UniPathway" id="UPA00056">
    <property type="reaction ID" value="UER00092"/>
</dbReference>
<dbReference type="Proteomes" id="UP000001574">
    <property type="component" value="Chromosome"/>
</dbReference>
<dbReference type="GO" id="GO:0030604">
    <property type="term" value="F:1-deoxy-D-xylulose-5-phosphate reductoisomerase activity"/>
    <property type="evidence" value="ECO:0007669"/>
    <property type="project" value="UniProtKB-UniRule"/>
</dbReference>
<dbReference type="GO" id="GO:0030145">
    <property type="term" value="F:manganese ion binding"/>
    <property type="evidence" value="ECO:0007669"/>
    <property type="project" value="TreeGrafter"/>
</dbReference>
<dbReference type="GO" id="GO:0070402">
    <property type="term" value="F:NADPH binding"/>
    <property type="evidence" value="ECO:0007669"/>
    <property type="project" value="InterPro"/>
</dbReference>
<dbReference type="GO" id="GO:0051484">
    <property type="term" value="P:isopentenyl diphosphate biosynthetic process, methylerythritol 4-phosphate pathway involved in terpenoid biosynthetic process"/>
    <property type="evidence" value="ECO:0007669"/>
    <property type="project" value="TreeGrafter"/>
</dbReference>
<dbReference type="FunFam" id="3.40.50.720:FF:000045">
    <property type="entry name" value="1-deoxy-D-xylulose 5-phosphate reductoisomerase"/>
    <property type="match status" value="1"/>
</dbReference>
<dbReference type="Gene3D" id="1.10.1740.10">
    <property type="match status" value="1"/>
</dbReference>
<dbReference type="Gene3D" id="3.40.50.720">
    <property type="entry name" value="NAD(P)-binding Rossmann-like Domain"/>
    <property type="match status" value="1"/>
</dbReference>
<dbReference type="HAMAP" id="MF_00183">
    <property type="entry name" value="DXP_reductoisom"/>
    <property type="match status" value="1"/>
</dbReference>
<dbReference type="InterPro" id="IPR003821">
    <property type="entry name" value="DXP_reductoisomerase"/>
</dbReference>
<dbReference type="InterPro" id="IPR013644">
    <property type="entry name" value="DXP_reductoisomerase_C"/>
</dbReference>
<dbReference type="InterPro" id="IPR013512">
    <property type="entry name" value="DXP_reductoisomerase_N"/>
</dbReference>
<dbReference type="InterPro" id="IPR026877">
    <property type="entry name" value="DXPR_C"/>
</dbReference>
<dbReference type="InterPro" id="IPR036169">
    <property type="entry name" value="DXPR_C_sf"/>
</dbReference>
<dbReference type="InterPro" id="IPR036291">
    <property type="entry name" value="NAD(P)-bd_dom_sf"/>
</dbReference>
<dbReference type="NCBIfam" id="TIGR00243">
    <property type="entry name" value="Dxr"/>
    <property type="match status" value="1"/>
</dbReference>
<dbReference type="PANTHER" id="PTHR30525">
    <property type="entry name" value="1-DEOXY-D-XYLULOSE 5-PHOSPHATE REDUCTOISOMERASE"/>
    <property type="match status" value="1"/>
</dbReference>
<dbReference type="PANTHER" id="PTHR30525:SF0">
    <property type="entry name" value="1-DEOXY-D-XYLULOSE 5-PHOSPHATE REDUCTOISOMERASE, CHLOROPLASTIC"/>
    <property type="match status" value="1"/>
</dbReference>
<dbReference type="Pfam" id="PF08436">
    <property type="entry name" value="DXP_redisom_C"/>
    <property type="match status" value="1"/>
</dbReference>
<dbReference type="Pfam" id="PF02670">
    <property type="entry name" value="DXP_reductoisom"/>
    <property type="match status" value="1"/>
</dbReference>
<dbReference type="Pfam" id="PF13288">
    <property type="entry name" value="DXPR_C"/>
    <property type="match status" value="1"/>
</dbReference>
<dbReference type="PIRSF" id="PIRSF006205">
    <property type="entry name" value="Dxp_reductismrs"/>
    <property type="match status" value="1"/>
</dbReference>
<dbReference type="SUPFAM" id="SSF69055">
    <property type="entry name" value="1-deoxy-D-xylulose-5-phosphate reductoisomerase, C-terminal domain"/>
    <property type="match status" value="1"/>
</dbReference>
<dbReference type="SUPFAM" id="SSF55347">
    <property type="entry name" value="Glyceraldehyde-3-phosphate dehydrogenase-like, C-terminal domain"/>
    <property type="match status" value="1"/>
</dbReference>
<dbReference type="SUPFAM" id="SSF51735">
    <property type="entry name" value="NAD(P)-binding Rossmann-fold domains"/>
    <property type="match status" value="1"/>
</dbReference>
<organism>
    <name type="scientific">Mycobacterium avium (strain 104)</name>
    <dbReference type="NCBI Taxonomy" id="243243"/>
    <lineage>
        <taxon>Bacteria</taxon>
        <taxon>Bacillati</taxon>
        <taxon>Actinomycetota</taxon>
        <taxon>Actinomycetes</taxon>
        <taxon>Mycobacteriales</taxon>
        <taxon>Mycobacteriaceae</taxon>
        <taxon>Mycobacterium</taxon>
        <taxon>Mycobacterium avium complex (MAC)</taxon>
    </lineage>
</organism>
<comment type="function">
    <text evidence="1">Catalyzes the NADPH-dependent rearrangement and reduction of 1-deoxy-D-xylulose-5-phosphate (DXP) to 2-C-methyl-D-erythritol 4-phosphate (MEP).</text>
</comment>
<comment type="catalytic activity">
    <reaction evidence="1">
        <text>2-C-methyl-D-erythritol 4-phosphate + NADP(+) = 1-deoxy-D-xylulose 5-phosphate + NADPH + H(+)</text>
        <dbReference type="Rhea" id="RHEA:13717"/>
        <dbReference type="ChEBI" id="CHEBI:15378"/>
        <dbReference type="ChEBI" id="CHEBI:57783"/>
        <dbReference type="ChEBI" id="CHEBI:57792"/>
        <dbReference type="ChEBI" id="CHEBI:58262"/>
        <dbReference type="ChEBI" id="CHEBI:58349"/>
        <dbReference type="EC" id="1.1.1.267"/>
    </reaction>
    <physiologicalReaction direction="right-to-left" evidence="1">
        <dbReference type="Rhea" id="RHEA:13719"/>
    </physiologicalReaction>
</comment>
<comment type="cofactor">
    <cofactor evidence="1">
        <name>Mg(2+)</name>
        <dbReference type="ChEBI" id="CHEBI:18420"/>
    </cofactor>
    <cofactor evidence="1">
        <name>Mn(2+)</name>
        <dbReference type="ChEBI" id="CHEBI:29035"/>
    </cofactor>
</comment>
<comment type="pathway">
    <text evidence="1">Isoprenoid biosynthesis; isopentenyl diphosphate biosynthesis via DXP pathway; isopentenyl diphosphate from 1-deoxy-D-xylulose 5-phosphate: step 1/6.</text>
</comment>
<comment type="similarity">
    <text evidence="1">Belongs to the DXR family.</text>
</comment>
<protein>
    <recommendedName>
        <fullName evidence="1">1-deoxy-D-xylulose 5-phosphate reductoisomerase</fullName>
        <shortName evidence="1">DXP reductoisomerase</shortName>
        <ecNumber evidence="1">1.1.1.267</ecNumber>
    </recommendedName>
    <alternativeName>
        <fullName evidence="1">1-deoxyxylulose-5-phosphate reductoisomerase</fullName>
    </alternativeName>
    <alternativeName>
        <fullName evidence="1">2-C-methyl-D-erythritol 4-phosphate synthase</fullName>
    </alternativeName>
</protein>
<keyword id="KW-0414">Isoprene biosynthesis</keyword>
<keyword id="KW-0464">Manganese</keyword>
<keyword id="KW-0479">Metal-binding</keyword>
<keyword id="KW-0521">NADP</keyword>
<keyword id="KW-0560">Oxidoreductase</keyword>
<name>DXR_MYCA1</name>
<reference key="1">
    <citation type="submission" date="2006-10" db="EMBL/GenBank/DDBJ databases">
        <authorList>
            <person name="Fleischmann R.D."/>
            <person name="Dodson R.J."/>
            <person name="Haft D.H."/>
            <person name="Merkel J.S."/>
            <person name="Nelson W.C."/>
            <person name="Fraser C.M."/>
        </authorList>
    </citation>
    <scope>NUCLEOTIDE SEQUENCE [LARGE SCALE GENOMIC DNA]</scope>
    <source>
        <strain>104</strain>
    </source>
</reference>
<sequence length="407" mass="42315">MTNPTSDGQPRGRLRVLVLGSTGSIGTQALQVIAANPDRFEVVGLAAGGANLDTLLRQRAETGVTNVAVADEHAARRAGDIPFCGPEAATRLVEETEADVVLNALVGALGLRPTLAALESGARLALANKESLIAGGPLVLAAAAPGQIVPVDSEHSALAQCLRGGTGDEVAKLVLTASGGPFRGWTAEELEHVTPEQAGAHPTWSMGPMNTLNSASLVNKGLELIETHLLFGIPYDRIEVVVHPQSIVHSMVTFVDGSTLAQASPPDMRLPISLALGWPHRVPGAAACCDFSTASSWEFEPLDNEVFPAVELARHAGQAGGCMTAIYNAANEEAAAAFLAGRVSFGAIVETIADVLHAADQWAPKFSETPANVDDVLDAQRWARQQAQRAVAQARPATVSAKTPGVV</sequence>
<proteinExistence type="inferred from homology"/>
<gene>
    <name evidence="1" type="primary">dxr</name>
    <name type="ordered locus">MAV_3727</name>
</gene>